<sequence>METPIIPSSSSLDRSGNSSNLLSVIPFQERTDSIIGCHFTLEIKAYHPDMMKSSEEGDVTLGSLYQGIHHIIRNKECQGLILGMDATHENKLHILALAFLCVIRKYEGKVSTYIERSKDTFSGVEQLLARIHIGDDHLGTYDPEVYQICGVEVPQGTYQLTLRTVLTPHNHTDGLSITLGIIVNSPARGMQGRSPMGVDVKRLILSFPKGTDPWTSYGEIKDKKGAVSKLKSILF</sequence>
<proteinExistence type="inferred from homology"/>
<dbReference type="EMBL" id="AY674964">
    <property type="protein sequence ID" value="AAV92085.1"/>
    <property type="molecule type" value="Genomic_RNA"/>
</dbReference>
<dbReference type="KEGG" id="vg:5076498"/>
<dbReference type="OrthoDB" id="17294at10239"/>
<dbReference type="Proteomes" id="UP000007540">
    <property type="component" value="Segment"/>
</dbReference>
<dbReference type="GO" id="GO:0033645">
    <property type="term" value="C:host cell endomembrane system"/>
    <property type="evidence" value="ECO:0007669"/>
    <property type="project" value="UniProtKB-SubCell"/>
</dbReference>
<dbReference type="GO" id="GO:0016020">
    <property type="term" value="C:membrane"/>
    <property type="evidence" value="ECO:0007669"/>
    <property type="project" value="UniProtKB-KW"/>
</dbReference>
<dbReference type="GO" id="GO:0019031">
    <property type="term" value="C:viral envelope"/>
    <property type="evidence" value="ECO:0007669"/>
    <property type="project" value="UniProtKB-KW"/>
</dbReference>
<dbReference type="GO" id="GO:0055036">
    <property type="term" value="C:virion membrane"/>
    <property type="evidence" value="ECO:0007669"/>
    <property type="project" value="UniProtKB-SubCell"/>
</dbReference>
<dbReference type="GO" id="GO:0039660">
    <property type="term" value="F:structural constituent of virion"/>
    <property type="evidence" value="ECO:0007669"/>
    <property type="project" value="UniProtKB-KW"/>
</dbReference>
<dbReference type="InterPro" id="IPR031454">
    <property type="entry name" value="Viral_M"/>
</dbReference>
<dbReference type="Pfam" id="PF17055">
    <property type="entry name" value="VMR2"/>
    <property type="match status" value="1"/>
</dbReference>
<gene>
    <name type="primary">M</name>
</gene>
<accession>Q5GA87</accession>
<name>MATRX_TAVCV</name>
<keyword id="KW-0053">Apoptosis</keyword>
<keyword id="KW-1043">Host membrane</keyword>
<keyword id="KW-0472">Membrane</keyword>
<keyword id="KW-1185">Reference proteome</keyword>
<keyword id="KW-0261">Viral envelope protein</keyword>
<keyword id="KW-0468">Viral matrix protein</keyword>
<keyword id="KW-0946">Virion</keyword>
<organismHost>
    <name type="scientific">Colocasia esculenta</name>
    <name type="common">Wild taro</name>
    <name type="synonym">Arum esculentum</name>
    <dbReference type="NCBI Taxonomy" id="4460"/>
</organismHost>
<organism>
    <name type="scientific">Taro vein chlorosis virus</name>
    <name type="common">TAVCV</name>
    <dbReference type="NCBI Taxonomy" id="2749935"/>
    <lineage>
        <taxon>Viruses</taxon>
        <taxon>Riboviria</taxon>
        <taxon>Orthornavirae</taxon>
        <taxon>Negarnaviricota</taxon>
        <taxon>Haploviricotina</taxon>
        <taxon>Monjiviricetes</taxon>
        <taxon>Mononegavirales</taxon>
        <taxon>Rhabdoviridae</taxon>
        <taxon>Betarhabdovirinae</taxon>
        <taxon>Alphanucleorhabdovirus</taxon>
    </lineage>
</organism>
<protein>
    <recommendedName>
        <fullName>Matrix protein</fullName>
    </recommendedName>
</protein>
<evidence type="ECO:0000250" key="1"/>
<evidence type="ECO:0000305" key="2"/>
<comment type="function">
    <text evidence="1">Plays a major role in assembly and budding of virion. Completely covers the ribonucleoprotein coil and keep it in condensed bullet-shaped form. Inhibits viral transcription and stimulates replication (By similarity).</text>
</comment>
<comment type="subunit">
    <text evidence="1">Homomultimer. Interacts with nucleoprotein and with the cytoplasmic domain of glycoprotein (By similarity).</text>
</comment>
<comment type="subcellular location">
    <subcellularLocation>
        <location>Virion membrane</location>
        <topology>Peripheral membrane protein</topology>
    </subcellularLocation>
    <subcellularLocation>
        <location evidence="1">Host endomembrane system</location>
        <topology evidence="1">Peripheral membrane protein</topology>
    </subcellularLocation>
</comment>
<comment type="miscellaneous">
    <text evidence="1">Most abundant protein in the virion.</text>
</comment>
<comment type="similarity">
    <text evidence="2">Belongs to the nucleorhabdovirus type-2 matrix protein family.</text>
</comment>
<reference key="1">
    <citation type="journal article" date="2005" name="J. Gen. Virol.">
        <title>Taro vein chlorosis virus: characterization and variability of a new nucleorhabdovirus.</title>
        <authorList>
            <person name="Revill P."/>
            <person name="Trinh X."/>
            <person name="Dale J."/>
            <person name="Harding R."/>
        </authorList>
    </citation>
    <scope>NUCLEOTIDE SEQUENCE [GENOMIC RNA]</scope>
</reference>
<feature type="chain" id="PRO_0000299248" description="Matrix protein">
    <location>
        <begin position="1"/>
        <end position="235"/>
    </location>
</feature>